<comment type="function">
    <text evidence="1">May help in the organization of the PsaL subunit.</text>
</comment>
<comment type="subcellular location">
    <subcellularLocation>
        <location evidence="1">Plastid</location>
        <location evidence="1">Chloroplast thylakoid membrane</location>
        <topology evidence="1">Single-pass membrane protein</topology>
    </subcellularLocation>
</comment>
<comment type="similarity">
    <text evidence="1">Belongs to the PsaI family.</text>
</comment>
<protein>
    <recommendedName>
        <fullName evidence="1">Photosystem I reaction center subunit VIII</fullName>
        <shortName evidence="1">PSI-I</shortName>
    </recommendedName>
</protein>
<organism>
    <name type="scientific">Helianthus annuus</name>
    <name type="common">Common sunflower</name>
    <dbReference type="NCBI Taxonomy" id="4232"/>
    <lineage>
        <taxon>Eukaryota</taxon>
        <taxon>Viridiplantae</taxon>
        <taxon>Streptophyta</taxon>
        <taxon>Embryophyta</taxon>
        <taxon>Tracheophyta</taxon>
        <taxon>Spermatophyta</taxon>
        <taxon>Magnoliopsida</taxon>
        <taxon>eudicotyledons</taxon>
        <taxon>Gunneridae</taxon>
        <taxon>Pentapetalae</taxon>
        <taxon>asterids</taxon>
        <taxon>campanulids</taxon>
        <taxon>Asterales</taxon>
        <taxon>Asteraceae</taxon>
        <taxon>Asteroideae</taxon>
        <taxon>Heliantheae alliance</taxon>
        <taxon>Heliantheae</taxon>
        <taxon>Helianthus</taxon>
    </lineage>
</organism>
<evidence type="ECO:0000255" key="1">
    <source>
        <dbReference type="HAMAP-Rule" id="MF_00431"/>
    </source>
</evidence>
<keyword id="KW-0150">Chloroplast</keyword>
<keyword id="KW-0472">Membrane</keyword>
<keyword id="KW-0602">Photosynthesis</keyword>
<keyword id="KW-0603">Photosystem I</keyword>
<keyword id="KW-0934">Plastid</keyword>
<keyword id="KW-0793">Thylakoid</keyword>
<keyword id="KW-0812">Transmembrane</keyword>
<keyword id="KW-1133">Transmembrane helix</keyword>
<name>PSAI_HELAN</name>
<proteinExistence type="inferred from homology"/>
<geneLocation type="chloroplast"/>
<sequence>MTTLNFPSVLVPLVGLVFPAIAMASLFLHVQKNKIV</sequence>
<accession>Q1KXU9</accession>
<feature type="chain" id="PRO_0000276023" description="Photosystem I reaction center subunit VIII">
    <location>
        <begin position="1"/>
        <end position="36"/>
    </location>
</feature>
<feature type="transmembrane region" description="Helical" evidence="1">
    <location>
        <begin position="8"/>
        <end position="28"/>
    </location>
</feature>
<dbReference type="EMBL" id="DQ383815">
    <property type="protein sequence ID" value="ABD47156.1"/>
    <property type="molecule type" value="Genomic_DNA"/>
</dbReference>
<dbReference type="RefSeq" id="YP_588127.1">
    <property type="nucleotide sequence ID" value="NC_007977.1"/>
</dbReference>
<dbReference type="SMR" id="Q1KXU9"/>
<dbReference type="GeneID" id="4055658"/>
<dbReference type="KEGG" id="han:4055658"/>
<dbReference type="OrthoDB" id="970998at2759"/>
<dbReference type="GO" id="GO:0009535">
    <property type="term" value="C:chloroplast thylakoid membrane"/>
    <property type="evidence" value="ECO:0007669"/>
    <property type="project" value="UniProtKB-SubCell"/>
</dbReference>
<dbReference type="GO" id="GO:0009522">
    <property type="term" value="C:photosystem I"/>
    <property type="evidence" value="ECO:0007669"/>
    <property type="project" value="UniProtKB-KW"/>
</dbReference>
<dbReference type="GO" id="GO:0015979">
    <property type="term" value="P:photosynthesis"/>
    <property type="evidence" value="ECO:0007669"/>
    <property type="project" value="UniProtKB-UniRule"/>
</dbReference>
<dbReference type="HAMAP" id="MF_00431">
    <property type="entry name" value="PSI_PsaI"/>
    <property type="match status" value="1"/>
</dbReference>
<dbReference type="InterPro" id="IPR001302">
    <property type="entry name" value="PSI_PsaI"/>
</dbReference>
<dbReference type="InterPro" id="IPR036357">
    <property type="entry name" value="PSI_PsaI_sf"/>
</dbReference>
<dbReference type="NCBIfam" id="TIGR03052">
    <property type="entry name" value="PS_I_psaI"/>
    <property type="match status" value="1"/>
</dbReference>
<dbReference type="PANTHER" id="PTHR35775">
    <property type="match status" value="1"/>
</dbReference>
<dbReference type="PANTHER" id="PTHR35775:SF2">
    <property type="entry name" value="PHOTOSYSTEM I REACTION CENTER SUBUNIT VIII"/>
    <property type="match status" value="1"/>
</dbReference>
<dbReference type="Pfam" id="PF00796">
    <property type="entry name" value="PSI_8"/>
    <property type="match status" value="1"/>
</dbReference>
<dbReference type="SUPFAM" id="SSF81540">
    <property type="entry name" value="Subunit VIII of photosystem I reaction centre, PsaI"/>
    <property type="match status" value="1"/>
</dbReference>
<reference key="1">
    <citation type="submission" date="2006-01" db="EMBL/GenBank/DDBJ databases">
        <title>A comparison of the first two published chloroplast genomes in Asteraceae: Lactuca and Helianthus.</title>
        <authorList>
            <person name="Timme R.E."/>
            <person name="Kuehl J.V."/>
            <person name="Boore J.L."/>
            <person name="Jansen R.K."/>
        </authorList>
    </citation>
    <scope>NUCLEOTIDE SEQUENCE [LARGE SCALE GENOMIC DNA]</scope>
    <source>
        <strain>cv. HA383</strain>
    </source>
</reference>
<gene>
    <name evidence="1" type="primary">psaI</name>
</gene>